<name>GELS_CHICK</name>
<sequence length="778" mass="85832">MGKQGFGYIFLTIFCTMALKLNCVSSVSVAGLGYVVTAAVVLSAVPVSMVEHAEFSKAGKEPGLQIWRIEKFDLVPVPKNLYGDFFTGDSYLVLNTIRQRSGNLQYDLHFWLGDESSQDERGAAAIFTVQMDDYLQGKAVQHREVQGHESSTFLGYFKSGIKYKAGGVASGFRHVVPNEVTVQRLLQVKGRRTVRATEVPVSWESFNTGDCFILDLGSNIYQWCGSNSNRQERLKATVLAKGIRDNEKNGRAKVFVSEEGAEREEMLQVLGPKPSLPQGASDDTKTDTANRKLAKLYKVSNGAGNMAVSLVADENPFSQAALNTEDCFILDHGTDGKIFVWKGRSANSDERKAALKTATDFIDKMGYPKHTQVQVLPESGETPLFKQFFKNWRDKDQTEGLGEAYISGHVAKIEKVPFDAATLHTSRAMAAQHGMEDDGSGKKQIWRIEGSEKVPVDPATYGQFYGGDSYIILYDYRHAGKQGQIIYTWQGAHSTQDEIATSAFLTVQLDEELGGSPVQKRVVQGKEPPHLMSMFGGKPLIVYKGGTSREGGQTTPAQTRLFQVRSSTSGATRAVELDPAASQLNSNDAFVLKTPSAAYLWVGRGSNSAELSGAQELLKVLGARPVQVSEGREPDNFWVALGGKAPYRTSPRLKDKKMDAYPPRLFACSNKSGRFTIEEVPGDLTQDDLATDDVMILDTWDQVFVWIGKDAQEEEKTEALKSAKRYIETDPASRDKRTPVTLVKQGLEPPTFSGWFLGWDDDYWSVDPLQRAMADVDV</sequence>
<proteinExistence type="evidence at transcript level"/>
<dbReference type="EMBL" id="AF042795">
    <property type="protein sequence ID" value="AAC62928.1"/>
    <property type="molecule type" value="mRNA"/>
</dbReference>
<dbReference type="RefSeq" id="NP_990265.1">
    <property type="nucleotide sequence ID" value="NM_204934.1"/>
</dbReference>
<dbReference type="SMR" id="O93510"/>
<dbReference type="BioGRID" id="676048">
    <property type="interactions" value="1"/>
</dbReference>
<dbReference type="FunCoup" id="O93510">
    <property type="interactions" value="1302"/>
</dbReference>
<dbReference type="IntAct" id="O93510">
    <property type="interactions" value="1"/>
</dbReference>
<dbReference type="STRING" id="9031.ENSGALP00000054518"/>
<dbReference type="PaxDb" id="9031-ENSGALP00000002197"/>
<dbReference type="GeneID" id="395774"/>
<dbReference type="KEGG" id="gga:395774"/>
<dbReference type="CTD" id="2934"/>
<dbReference type="VEuPathDB" id="HostDB:geneid_395774"/>
<dbReference type="eggNOG" id="KOG0443">
    <property type="taxonomic scope" value="Eukaryota"/>
</dbReference>
<dbReference type="InParanoid" id="O93510"/>
<dbReference type="OrthoDB" id="6375767at2759"/>
<dbReference type="PhylomeDB" id="O93510"/>
<dbReference type="PRO" id="PR:O93510"/>
<dbReference type="Proteomes" id="UP000000539">
    <property type="component" value="Unassembled WGS sequence"/>
</dbReference>
<dbReference type="GO" id="GO:0015629">
    <property type="term" value="C:actin cytoskeleton"/>
    <property type="evidence" value="ECO:0000318"/>
    <property type="project" value="GO_Central"/>
</dbReference>
<dbReference type="GO" id="GO:0005737">
    <property type="term" value="C:cytoplasm"/>
    <property type="evidence" value="ECO:0000318"/>
    <property type="project" value="GO_Central"/>
</dbReference>
<dbReference type="GO" id="GO:0005615">
    <property type="term" value="C:extracellular space"/>
    <property type="evidence" value="ECO:0000318"/>
    <property type="project" value="GO_Central"/>
</dbReference>
<dbReference type="GO" id="GO:0051015">
    <property type="term" value="F:actin filament binding"/>
    <property type="evidence" value="ECO:0000318"/>
    <property type="project" value="GO_Central"/>
</dbReference>
<dbReference type="GO" id="GO:0046872">
    <property type="term" value="F:metal ion binding"/>
    <property type="evidence" value="ECO:0007669"/>
    <property type="project" value="UniProtKB-KW"/>
</dbReference>
<dbReference type="GO" id="GO:0005546">
    <property type="term" value="F:phosphatidylinositol-4,5-bisphosphate binding"/>
    <property type="evidence" value="ECO:0000318"/>
    <property type="project" value="GO_Central"/>
</dbReference>
<dbReference type="GO" id="GO:0051014">
    <property type="term" value="P:actin filament severing"/>
    <property type="evidence" value="ECO:0000318"/>
    <property type="project" value="GO_Central"/>
</dbReference>
<dbReference type="GO" id="GO:0008154">
    <property type="term" value="P:actin polymerization or depolymerization"/>
    <property type="evidence" value="ECO:0000318"/>
    <property type="project" value="GO_Central"/>
</dbReference>
<dbReference type="GO" id="GO:0051016">
    <property type="term" value="P:barbed-end actin filament capping"/>
    <property type="evidence" value="ECO:0000318"/>
    <property type="project" value="GO_Central"/>
</dbReference>
<dbReference type="GO" id="GO:0030031">
    <property type="term" value="P:cell projection assembly"/>
    <property type="evidence" value="ECO:0000318"/>
    <property type="project" value="GO_Central"/>
</dbReference>
<dbReference type="GO" id="GO:0007417">
    <property type="term" value="P:central nervous system development"/>
    <property type="evidence" value="ECO:0000318"/>
    <property type="project" value="GO_Central"/>
</dbReference>
<dbReference type="GO" id="GO:0060271">
    <property type="term" value="P:cilium assembly"/>
    <property type="evidence" value="ECO:0000250"/>
    <property type="project" value="UniProtKB"/>
</dbReference>
<dbReference type="CDD" id="cd11290">
    <property type="entry name" value="gelsolin_S1_like"/>
    <property type="match status" value="1"/>
</dbReference>
<dbReference type="CDD" id="cd11289">
    <property type="entry name" value="gelsolin_S2_like"/>
    <property type="match status" value="1"/>
</dbReference>
<dbReference type="CDD" id="cd11292">
    <property type="entry name" value="gelsolin_S3_like"/>
    <property type="match status" value="1"/>
</dbReference>
<dbReference type="CDD" id="cd11293">
    <property type="entry name" value="gelsolin_S4_like"/>
    <property type="match status" value="1"/>
</dbReference>
<dbReference type="CDD" id="cd11288">
    <property type="entry name" value="gelsolin_S5_like"/>
    <property type="match status" value="1"/>
</dbReference>
<dbReference type="CDD" id="cd11291">
    <property type="entry name" value="gelsolin_S6_like"/>
    <property type="match status" value="1"/>
</dbReference>
<dbReference type="FunFam" id="3.40.20.10:FF:000001">
    <property type="entry name" value="Gelsolin"/>
    <property type="match status" value="1"/>
</dbReference>
<dbReference type="FunFam" id="3.40.20.10:FF:000002">
    <property type="entry name" value="Gelsolin"/>
    <property type="match status" value="1"/>
</dbReference>
<dbReference type="FunFam" id="3.40.20.10:FF:000004">
    <property type="entry name" value="Gelsolin"/>
    <property type="match status" value="1"/>
</dbReference>
<dbReference type="FunFam" id="3.40.20.10:FF:000005">
    <property type="entry name" value="Gelsolin"/>
    <property type="match status" value="1"/>
</dbReference>
<dbReference type="FunFam" id="3.40.20.10:FF:000009">
    <property type="entry name" value="gelsolin isoform X1"/>
    <property type="match status" value="1"/>
</dbReference>
<dbReference type="FunFam" id="3.40.20.10:FF:000008">
    <property type="entry name" value="gelsolin isoform X2"/>
    <property type="match status" value="1"/>
</dbReference>
<dbReference type="Gene3D" id="3.40.20.10">
    <property type="entry name" value="Severin"/>
    <property type="match status" value="6"/>
</dbReference>
<dbReference type="InterPro" id="IPR029006">
    <property type="entry name" value="ADF-H/Gelsolin-like_dom_sf"/>
</dbReference>
<dbReference type="InterPro" id="IPR007123">
    <property type="entry name" value="Gelsolin-like_dom"/>
</dbReference>
<dbReference type="InterPro" id="IPR007122">
    <property type="entry name" value="Villin/Gelsolin"/>
</dbReference>
<dbReference type="PANTHER" id="PTHR11977:SF29">
    <property type="entry name" value="GELSOLIN"/>
    <property type="match status" value="1"/>
</dbReference>
<dbReference type="PANTHER" id="PTHR11977">
    <property type="entry name" value="VILLIN"/>
    <property type="match status" value="1"/>
</dbReference>
<dbReference type="Pfam" id="PF00626">
    <property type="entry name" value="Gelsolin"/>
    <property type="match status" value="6"/>
</dbReference>
<dbReference type="PRINTS" id="PR00597">
    <property type="entry name" value="GELSOLIN"/>
</dbReference>
<dbReference type="SMART" id="SM00262">
    <property type="entry name" value="GEL"/>
    <property type="match status" value="6"/>
</dbReference>
<dbReference type="SUPFAM" id="SSF55753">
    <property type="entry name" value="Actin depolymerizing proteins"/>
    <property type="match status" value="6"/>
</dbReference>
<accession>O93510</accession>
<protein>
    <recommendedName>
        <fullName>Gelsolin</fullName>
    </recommendedName>
    <alternativeName>
        <fullName>Actin-depolymerizing factor</fullName>
        <shortName>ADF</shortName>
    </alternativeName>
    <alternativeName>
        <fullName>Brevin</fullName>
    </alternativeName>
    <alternativeName>
        <fullName>Homogenin</fullName>
    </alternativeName>
</protein>
<gene>
    <name type="primary">GSN</name>
</gene>
<comment type="function">
    <text evidence="2">Calcium-regulated, actin-modulating protein that binds to the plus (or barbed) ends of actin monomers or filaments, preventing monomer exchange (end-blocking or capping). It can promote the assembly of monomers into filaments (nucleation) as well as sever filaments already formed (By similarity). Plays a role in ciliogenesis (By similarity).</text>
</comment>
<comment type="subunit">
    <text evidence="5">Binds to actin and to fibronectin.</text>
</comment>
<comment type="subcellular location">
    <subcellularLocation>
        <location evidence="1">Secreted</location>
    </subcellularLocation>
    <subcellularLocation>
        <location evidence="1">Cytoplasm</location>
        <location evidence="1">Cytoskeleton</location>
    </subcellularLocation>
    <text evidence="1">A cytoplasmic form may also exist.</text>
</comment>
<comment type="tissue specificity">
    <text evidence="4">Highly expressed in homogene cells of the basilar papilla. Also detected in subcutaneous layer of the skin.</text>
</comment>
<comment type="domain">
    <text evidence="2">Comprises six structurally related gelsolin-like (G1-G6) domains, that, in a calcium-free environment, are packed together to form a compact globular structure in which the putative actin-binding sequences are not sufficiently exposed to enable binding to occur. Binding calcium may release the connections that join the N- and C-terminal halves of gelsolin, enabling each half to bind actin relatively independently. G1 and G4 bind two Ca(2+) in a type I and in a type II manner. G2, G3, G5 and G6 bind only one Ca(2+) in a type II manner. Type I Ca(2+) binding sites are shared between actin and gelsolin-like repeats G1 and G4. Type I binding governs the strength of interactions between gelsolin and actin by direct participation at the binding interface. Ca(2+) binding to G2 and G6 disrupts the interactions between G2 and G6, releases the C-terminal tail, and induces large interdomain rearrangements that result in the exposure of the F-actin-binding site on G2 and contributes to the activation of gelsolin. Binding to phosphoinositides may inhibit the severing and capping properties of gelsolin.</text>
</comment>
<comment type="similarity">
    <text evidence="5">Belongs to the villin/gelsolin family.</text>
</comment>
<feature type="signal peptide" evidence="3">
    <location>
        <begin position="1"/>
        <end position="23"/>
    </location>
</feature>
<feature type="chain" id="PRO_0000036392" description="Gelsolin">
    <location>
        <begin position="24"/>
        <end position="778"/>
    </location>
</feature>
<feature type="repeat" description="Gelsolin-like 1" evidence="3">
    <location>
        <begin position="72"/>
        <end position="154"/>
    </location>
</feature>
<feature type="repeat" description="Gelsolin-like 2" evidence="3">
    <location>
        <begin position="193"/>
        <end position="266"/>
    </location>
</feature>
<feature type="repeat" description="Gelsolin-like 3" evidence="3">
    <location>
        <begin position="313"/>
        <end position="385"/>
    </location>
</feature>
<feature type="repeat" description="Gelsolin-like 4" evidence="3">
    <location>
        <begin position="451"/>
        <end position="532"/>
    </location>
</feature>
<feature type="repeat" description="Gelsolin-like 5" evidence="3">
    <location>
        <begin position="574"/>
        <end position="638"/>
    </location>
</feature>
<feature type="repeat" description="Gelsolin-like 6" evidence="3">
    <location>
        <begin position="677"/>
        <end position="752"/>
    </location>
</feature>
<feature type="region of interest" description="Actin-severing" evidence="3">
    <location>
        <begin position="49"/>
        <end position="172"/>
    </location>
</feature>
<feature type="region of interest" description="Actin-actin interfilament contact point">
    <location>
        <begin position="119"/>
        <end position="122"/>
    </location>
</feature>
<feature type="region of interest" description="Actin-binding, Ca-sensitive" evidence="3">
    <location>
        <begin position="430"/>
        <end position="778"/>
    </location>
</feature>
<feature type="binding site" evidence="2">
    <location>
        <position position="88"/>
    </location>
    <ligand>
        <name>Ca(2+)</name>
        <dbReference type="ChEBI" id="CHEBI:29108"/>
        <label>1</label>
        <note>type II</note>
    </ligand>
</feature>
<feature type="binding site" evidence="2">
    <location>
        <position position="89"/>
    </location>
    <ligand>
        <name>Ca(2+)</name>
        <dbReference type="ChEBI" id="CHEBI:29108"/>
        <label>1</label>
        <note>type II</note>
    </ligand>
</feature>
<feature type="binding site" evidence="2">
    <location>
        <position position="120"/>
    </location>
    <ligand>
        <name>Ca(2+)</name>
        <dbReference type="ChEBI" id="CHEBI:29108"/>
        <label>1</label>
        <note>type II</note>
    </ligand>
</feature>
<feature type="binding site" evidence="2">
    <location>
        <position position="132"/>
    </location>
    <ligand>
        <name>Ca(2+)</name>
        <dbReference type="ChEBI" id="CHEBI:29108"/>
        <label>2</label>
        <note>type I</note>
    </ligand>
</feature>
<feature type="binding site" evidence="2">
    <location>
        <position position="137"/>
    </location>
    <ligand>
        <name>Ca(2+)</name>
        <dbReference type="ChEBI" id="CHEBI:29108"/>
        <label>2</label>
        <note>type I</note>
    </ligand>
</feature>
<feature type="binding site" evidence="2">
    <location>
        <position position="139"/>
    </location>
    <ligand>
        <name>Ca(2+)</name>
        <dbReference type="ChEBI" id="CHEBI:29108"/>
        <label>2</label>
        <note>type I</note>
    </ligand>
</feature>
<feature type="binding site" evidence="1">
    <location>
        <begin position="158"/>
        <end position="165"/>
    </location>
    <ligand>
        <name>a 1,2-diacyl-sn-glycero-3-phospho-(1D-myo-inositol-4,5-bisphosphate)</name>
        <dbReference type="ChEBI" id="CHEBI:58456"/>
    </ligand>
</feature>
<feature type="binding site" evidence="2">
    <location>
        <position position="168"/>
    </location>
    <ligand>
        <name>Ca(2+)</name>
        <dbReference type="ChEBI" id="CHEBI:29108"/>
        <label>1</label>
        <note>type II</note>
    </ligand>
</feature>
<feature type="binding site" evidence="1">
    <location>
        <begin position="184"/>
        <end position="192"/>
    </location>
    <ligand>
        <name>a 1,2-diacyl-sn-glycero-3-phospho-(1D-myo-inositol-4,5-bisphosphate)</name>
        <dbReference type="ChEBI" id="CHEBI:58456"/>
    </ligand>
</feature>
<feature type="binding site" evidence="2">
    <location>
        <position position="209"/>
    </location>
    <ligand>
        <name>Ca(2+)</name>
        <dbReference type="ChEBI" id="CHEBI:29108"/>
        <label>3</label>
        <note>type II</note>
    </ligand>
</feature>
<feature type="binding site" evidence="2">
    <location>
        <position position="210"/>
    </location>
    <ligand>
        <name>Ca(2+)</name>
        <dbReference type="ChEBI" id="CHEBI:29108"/>
        <label>3</label>
        <note>type II</note>
    </ligand>
</feature>
<feature type="binding site" evidence="2">
    <location>
        <position position="232"/>
    </location>
    <ligand>
        <name>Ca(2+)</name>
        <dbReference type="ChEBI" id="CHEBI:29108"/>
        <label>3</label>
        <note>type II</note>
    </ligand>
</feature>
<feature type="binding site" evidence="2">
    <location>
        <position position="282"/>
    </location>
    <ligand>
        <name>Ca(2+)</name>
        <dbReference type="ChEBI" id="CHEBI:29108"/>
        <label>3</label>
        <note>type II</note>
    </ligand>
</feature>
<feature type="binding site" evidence="2">
    <location>
        <position position="325"/>
    </location>
    <ligand>
        <name>Ca(2+)</name>
        <dbReference type="ChEBI" id="CHEBI:29108"/>
        <label>4</label>
        <note>type II</note>
    </ligand>
</feature>
<feature type="binding site" evidence="2">
    <location>
        <position position="326"/>
    </location>
    <ligand>
        <name>Ca(2+)</name>
        <dbReference type="ChEBI" id="CHEBI:29108"/>
        <label>4</label>
        <note>type II</note>
    </ligand>
</feature>
<feature type="binding site" evidence="2">
    <location>
        <position position="350"/>
    </location>
    <ligand>
        <name>Ca(2+)</name>
        <dbReference type="ChEBI" id="CHEBI:29108"/>
        <label>4</label>
        <note>type II</note>
    </ligand>
</feature>
<feature type="binding site" evidence="2">
    <location>
        <position position="467"/>
    </location>
    <ligand>
        <name>Ca(2+)</name>
        <dbReference type="ChEBI" id="CHEBI:29108"/>
        <label>5</label>
        <note>type II</note>
    </ligand>
</feature>
<feature type="binding site" evidence="2">
    <location>
        <position position="468"/>
    </location>
    <ligand>
        <name>Ca(2+)</name>
        <dbReference type="ChEBI" id="CHEBI:29108"/>
        <label>5</label>
        <note>type II</note>
    </ligand>
</feature>
<feature type="binding site" evidence="2">
    <location>
        <position position="498"/>
    </location>
    <ligand>
        <name>Ca(2+)</name>
        <dbReference type="ChEBI" id="CHEBI:29108"/>
        <label>5</label>
        <note>type II</note>
    </ligand>
</feature>
<feature type="binding site" evidence="2">
    <location>
        <position position="510"/>
    </location>
    <ligand>
        <name>Ca(2+)</name>
        <dbReference type="ChEBI" id="CHEBI:29108"/>
        <label>6</label>
        <note>type I</note>
    </ligand>
</feature>
<feature type="binding site" evidence="2">
    <location>
        <position position="515"/>
    </location>
    <ligand>
        <name>Ca(2+)</name>
        <dbReference type="ChEBI" id="CHEBI:29108"/>
        <label>6</label>
        <note>type I</note>
    </ligand>
</feature>
<feature type="binding site" evidence="2">
    <location>
        <position position="517"/>
    </location>
    <ligand>
        <name>Ca(2+)</name>
        <dbReference type="ChEBI" id="CHEBI:29108"/>
        <label>6</label>
        <note>type I</note>
    </ligand>
</feature>
<feature type="binding site" evidence="2">
    <location>
        <position position="547"/>
    </location>
    <ligand>
        <name>Ca(2+)</name>
        <dbReference type="ChEBI" id="CHEBI:29108"/>
        <label>5</label>
        <note>type II</note>
    </ligand>
</feature>
<feature type="binding site" evidence="2">
    <location>
        <position position="587"/>
    </location>
    <ligand>
        <name>Ca(2+)</name>
        <dbReference type="ChEBI" id="CHEBI:29108"/>
        <label>7</label>
        <note>type II</note>
    </ligand>
</feature>
<feature type="binding site" evidence="2">
    <location>
        <position position="588"/>
    </location>
    <ligand>
        <name>Ca(2+)</name>
        <dbReference type="ChEBI" id="CHEBI:29108"/>
        <label>7</label>
        <note>type II</note>
    </ligand>
</feature>
<feature type="binding site" evidence="2">
    <location>
        <position position="610"/>
    </location>
    <ligand>
        <name>Ca(2+)</name>
        <dbReference type="ChEBI" id="CHEBI:29108"/>
        <label>7</label>
        <note>type II</note>
    </ligand>
</feature>
<feature type="binding site" evidence="2">
    <location>
        <position position="692"/>
    </location>
    <ligand>
        <name>Ca(2+)</name>
        <dbReference type="ChEBI" id="CHEBI:29108"/>
        <label>8</label>
        <note>type II</note>
    </ligand>
</feature>
<feature type="binding site" evidence="2">
    <location>
        <position position="693"/>
    </location>
    <ligand>
        <name>Ca(2+)</name>
        <dbReference type="ChEBI" id="CHEBI:29108"/>
        <label>8</label>
        <note>type II</note>
    </ligand>
</feature>
<feature type="binding site" evidence="2">
    <location>
        <position position="715"/>
    </location>
    <ligand>
        <name>Ca(2+)</name>
        <dbReference type="ChEBI" id="CHEBI:29108"/>
        <label>8</label>
        <note>type II</note>
    </ligand>
</feature>
<feature type="disulfide bond" evidence="2">
    <location>
        <begin position="211"/>
        <end position="224"/>
    </location>
</feature>
<reference evidence="5" key="1">
    <citation type="journal article" date="1998" name="Proc. Natl. Acad. Sci. U.S.A.">
        <title>Molecular markers for cell types of the inner ear and candidate genes for hearing disorders.</title>
        <authorList>
            <person name="Heller S."/>
            <person name="Sheane C.A."/>
            <person name="Javed Z."/>
            <person name="Hudspeth A.J."/>
        </authorList>
    </citation>
    <scope>NUCLEOTIDE SEQUENCE [MRNA]</scope>
    <scope>TISSUE SPECIFICITY</scope>
    <source>
        <strain>White leghorn</strain>
        <tissue>Basilar papilla</tissue>
    </source>
</reference>
<evidence type="ECO:0000250" key="1"/>
<evidence type="ECO:0000250" key="2">
    <source>
        <dbReference type="UniProtKB" id="P06396"/>
    </source>
</evidence>
<evidence type="ECO:0000255" key="3"/>
<evidence type="ECO:0000269" key="4">
    <source>
    </source>
</evidence>
<evidence type="ECO:0000305" key="5"/>
<keyword id="KW-0117">Actin capping</keyword>
<keyword id="KW-0009">Actin-binding</keyword>
<keyword id="KW-0106">Calcium</keyword>
<keyword id="KW-0970">Cilium biogenesis/degradation</keyword>
<keyword id="KW-0963">Cytoplasm</keyword>
<keyword id="KW-0206">Cytoskeleton</keyword>
<keyword id="KW-1015">Disulfide bond</keyword>
<keyword id="KW-0479">Metal-binding</keyword>
<keyword id="KW-1185">Reference proteome</keyword>
<keyword id="KW-0677">Repeat</keyword>
<keyword id="KW-0964">Secreted</keyword>
<keyword id="KW-0732">Signal</keyword>
<organism>
    <name type="scientific">Gallus gallus</name>
    <name type="common">Chicken</name>
    <dbReference type="NCBI Taxonomy" id="9031"/>
    <lineage>
        <taxon>Eukaryota</taxon>
        <taxon>Metazoa</taxon>
        <taxon>Chordata</taxon>
        <taxon>Craniata</taxon>
        <taxon>Vertebrata</taxon>
        <taxon>Euteleostomi</taxon>
        <taxon>Archelosauria</taxon>
        <taxon>Archosauria</taxon>
        <taxon>Dinosauria</taxon>
        <taxon>Saurischia</taxon>
        <taxon>Theropoda</taxon>
        <taxon>Coelurosauria</taxon>
        <taxon>Aves</taxon>
        <taxon>Neognathae</taxon>
        <taxon>Galloanserae</taxon>
        <taxon>Galliformes</taxon>
        <taxon>Phasianidae</taxon>
        <taxon>Phasianinae</taxon>
        <taxon>Gallus</taxon>
    </lineage>
</organism>